<accession>A4VYQ2</accession>
<keyword id="KW-0687">Ribonucleoprotein</keyword>
<keyword id="KW-0689">Ribosomal protein</keyword>
<keyword id="KW-0694">RNA-binding</keyword>
<keyword id="KW-0699">rRNA-binding</keyword>
<protein>
    <recommendedName>
        <fullName evidence="1">Small ribosomal subunit protein uS17</fullName>
    </recommendedName>
    <alternativeName>
        <fullName evidence="2">30S ribosomal protein S17</fullName>
    </alternativeName>
</protein>
<reference key="1">
    <citation type="journal article" date="2007" name="PLoS ONE">
        <title>A glimpse of streptococcal toxic shock syndrome from comparative genomics of S. suis 2 Chinese isolates.</title>
        <authorList>
            <person name="Chen C."/>
            <person name="Tang J."/>
            <person name="Dong W."/>
            <person name="Wang C."/>
            <person name="Feng Y."/>
            <person name="Wang J."/>
            <person name="Zheng F."/>
            <person name="Pan X."/>
            <person name="Liu D."/>
            <person name="Li M."/>
            <person name="Song Y."/>
            <person name="Zhu X."/>
            <person name="Sun H."/>
            <person name="Feng T."/>
            <person name="Guo Z."/>
            <person name="Ju A."/>
            <person name="Ge J."/>
            <person name="Dong Y."/>
            <person name="Sun W."/>
            <person name="Jiang Y."/>
            <person name="Wang J."/>
            <person name="Yan J."/>
            <person name="Yang H."/>
            <person name="Wang X."/>
            <person name="Gao G.F."/>
            <person name="Yang R."/>
            <person name="Wang J."/>
            <person name="Yu J."/>
        </authorList>
    </citation>
    <scope>NUCLEOTIDE SEQUENCE [LARGE SCALE GENOMIC DNA]</scope>
    <source>
        <strain>98HAH33</strain>
    </source>
</reference>
<feature type="chain" id="PRO_1000055032" description="Small ribosomal subunit protein uS17">
    <location>
        <begin position="1"/>
        <end position="86"/>
    </location>
</feature>
<organism>
    <name type="scientific">Streptococcus suis (strain 98HAH33)</name>
    <dbReference type="NCBI Taxonomy" id="391296"/>
    <lineage>
        <taxon>Bacteria</taxon>
        <taxon>Bacillati</taxon>
        <taxon>Bacillota</taxon>
        <taxon>Bacilli</taxon>
        <taxon>Lactobacillales</taxon>
        <taxon>Streptococcaceae</taxon>
        <taxon>Streptococcus</taxon>
    </lineage>
</organism>
<comment type="function">
    <text evidence="1">One of the primary rRNA binding proteins, it binds specifically to the 5'-end of 16S ribosomal RNA.</text>
</comment>
<comment type="subunit">
    <text evidence="1">Part of the 30S ribosomal subunit.</text>
</comment>
<comment type="similarity">
    <text evidence="1">Belongs to the universal ribosomal protein uS17 family.</text>
</comment>
<name>RS17_STRS2</name>
<evidence type="ECO:0000255" key="1">
    <source>
        <dbReference type="HAMAP-Rule" id="MF_01345"/>
    </source>
</evidence>
<evidence type="ECO:0000305" key="2"/>
<dbReference type="EMBL" id="CP000408">
    <property type="protein sequence ID" value="ABP91241.1"/>
    <property type="molecule type" value="Genomic_DNA"/>
</dbReference>
<dbReference type="SMR" id="A4VYQ2"/>
<dbReference type="KEGG" id="ssv:SSU98_0081"/>
<dbReference type="HOGENOM" id="CLU_073626_1_0_9"/>
<dbReference type="GO" id="GO:0022627">
    <property type="term" value="C:cytosolic small ribosomal subunit"/>
    <property type="evidence" value="ECO:0007669"/>
    <property type="project" value="TreeGrafter"/>
</dbReference>
<dbReference type="GO" id="GO:0019843">
    <property type="term" value="F:rRNA binding"/>
    <property type="evidence" value="ECO:0007669"/>
    <property type="project" value="UniProtKB-UniRule"/>
</dbReference>
<dbReference type="GO" id="GO:0003735">
    <property type="term" value="F:structural constituent of ribosome"/>
    <property type="evidence" value="ECO:0007669"/>
    <property type="project" value="InterPro"/>
</dbReference>
<dbReference type="GO" id="GO:0006412">
    <property type="term" value="P:translation"/>
    <property type="evidence" value="ECO:0007669"/>
    <property type="project" value="UniProtKB-UniRule"/>
</dbReference>
<dbReference type="CDD" id="cd00364">
    <property type="entry name" value="Ribosomal_uS17"/>
    <property type="match status" value="1"/>
</dbReference>
<dbReference type="FunFam" id="2.40.50.140:FF:000026">
    <property type="entry name" value="30S ribosomal protein S17"/>
    <property type="match status" value="1"/>
</dbReference>
<dbReference type="Gene3D" id="2.40.50.140">
    <property type="entry name" value="Nucleic acid-binding proteins"/>
    <property type="match status" value="1"/>
</dbReference>
<dbReference type="HAMAP" id="MF_01345_B">
    <property type="entry name" value="Ribosomal_uS17_B"/>
    <property type="match status" value="1"/>
</dbReference>
<dbReference type="InterPro" id="IPR012340">
    <property type="entry name" value="NA-bd_OB-fold"/>
</dbReference>
<dbReference type="InterPro" id="IPR000266">
    <property type="entry name" value="Ribosomal_uS17"/>
</dbReference>
<dbReference type="InterPro" id="IPR019984">
    <property type="entry name" value="Ribosomal_uS17_bact/chlr"/>
</dbReference>
<dbReference type="InterPro" id="IPR019979">
    <property type="entry name" value="Ribosomal_uS17_CS"/>
</dbReference>
<dbReference type="NCBIfam" id="NF004123">
    <property type="entry name" value="PRK05610.1"/>
    <property type="match status" value="1"/>
</dbReference>
<dbReference type="NCBIfam" id="TIGR03635">
    <property type="entry name" value="uS17_bact"/>
    <property type="match status" value="1"/>
</dbReference>
<dbReference type="PANTHER" id="PTHR10744">
    <property type="entry name" value="40S RIBOSOMAL PROTEIN S11 FAMILY MEMBER"/>
    <property type="match status" value="1"/>
</dbReference>
<dbReference type="PANTHER" id="PTHR10744:SF1">
    <property type="entry name" value="SMALL RIBOSOMAL SUBUNIT PROTEIN US17M"/>
    <property type="match status" value="1"/>
</dbReference>
<dbReference type="Pfam" id="PF00366">
    <property type="entry name" value="Ribosomal_S17"/>
    <property type="match status" value="1"/>
</dbReference>
<dbReference type="PRINTS" id="PR00973">
    <property type="entry name" value="RIBOSOMALS17"/>
</dbReference>
<dbReference type="SUPFAM" id="SSF50249">
    <property type="entry name" value="Nucleic acid-binding proteins"/>
    <property type="match status" value="1"/>
</dbReference>
<dbReference type="PROSITE" id="PS00056">
    <property type="entry name" value="RIBOSOMAL_S17"/>
    <property type="match status" value="1"/>
</dbReference>
<sequence>MERNNRKVLVGRVVSDKMDKTITVVVETKRNHPVYGKRINYSKKYKAHDENNVAKEGDIVRIMETRPLSATKRFRLVEVVEEAVII</sequence>
<proteinExistence type="inferred from homology"/>
<gene>
    <name evidence="1" type="primary">rpsQ</name>
    <name type="ordered locus">SSU98_0081</name>
</gene>